<evidence type="ECO:0000250" key="1">
    <source>
        <dbReference type="UniProtKB" id="P03915"/>
    </source>
</evidence>
<evidence type="ECO:0000250" key="2">
    <source>
        <dbReference type="UniProtKB" id="P03920"/>
    </source>
</evidence>
<evidence type="ECO:0000255" key="3"/>
<evidence type="ECO:0000305" key="4"/>
<keyword id="KW-0249">Electron transport</keyword>
<keyword id="KW-0472">Membrane</keyword>
<keyword id="KW-0496">Mitochondrion</keyword>
<keyword id="KW-0999">Mitochondrion inner membrane</keyword>
<keyword id="KW-0520">NAD</keyword>
<keyword id="KW-0679">Respiratory chain</keyword>
<keyword id="KW-1278">Translocase</keyword>
<keyword id="KW-0812">Transmembrane</keyword>
<keyword id="KW-1133">Transmembrane helix</keyword>
<keyword id="KW-0813">Transport</keyword>
<keyword id="KW-0830">Ubiquinone</keyword>
<name>NU5M_OSPRO</name>
<feature type="chain" id="PRO_0000118110" description="NADH-ubiquinone oxidoreductase chain 5">
    <location>
        <begin position="1"/>
        <end position="602"/>
    </location>
</feature>
<feature type="transmembrane region" description="Helical" evidence="3">
    <location>
        <begin position="1"/>
        <end position="21"/>
    </location>
</feature>
<feature type="transmembrane region" description="Helical" evidence="3">
    <location>
        <begin position="39"/>
        <end position="59"/>
    </location>
</feature>
<feature type="transmembrane region" description="Helical" evidence="3">
    <location>
        <begin position="88"/>
        <end position="108"/>
    </location>
</feature>
<feature type="transmembrane region" description="Helical" evidence="3">
    <location>
        <begin position="118"/>
        <end position="138"/>
    </location>
</feature>
<feature type="transmembrane region" description="Helical" evidence="3">
    <location>
        <begin position="141"/>
        <end position="161"/>
    </location>
</feature>
<feature type="transmembrane region" description="Helical" evidence="3">
    <location>
        <begin position="172"/>
        <end position="192"/>
    </location>
</feature>
<feature type="transmembrane region" description="Helical" evidence="3">
    <location>
        <begin position="201"/>
        <end position="221"/>
    </location>
</feature>
<feature type="transmembrane region" description="Helical" evidence="3">
    <location>
        <begin position="240"/>
        <end position="260"/>
    </location>
</feature>
<feature type="transmembrane region" description="Helical" evidence="3">
    <location>
        <begin position="272"/>
        <end position="292"/>
    </location>
</feature>
<feature type="transmembrane region" description="Helical" evidence="3">
    <location>
        <begin position="300"/>
        <end position="319"/>
    </location>
</feature>
<feature type="transmembrane region" description="Helical" evidence="3">
    <location>
        <begin position="324"/>
        <end position="346"/>
    </location>
</feature>
<feature type="transmembrane region" description="Helical" evidence="3">
    <location>
        <begin position="369"/>
        <end position="389"/>
    </location>
</feature>
<feature type="transmembrane region" description="Helical" evidence="3">
    <location>
        <begin position="408"/>
        <end position="428"/>
    </location>
</feature>
<feature type="transmembrane region" description="Helical" evidence="3">
    <location>
        <begin position="457"/>
        <end position="477"/>
    </location>
</feature>
<feature type="transmembrane region" description="Helical" evidence="3">
    <location>
        <begin position="481"/>
        <end position="501"/>
    </location>
</feature>
<feature type="transmembrane region" description="Helical" evidence="3">
    <location>
        <begin position="582"/>
        <end position="602"/>
    </location>
</feature>
<geneLocation type="mitochondrion"/>
<gene>
    <name type="primary">MT-ND5</name>
    <name type="synonym">MTND5</name>
    <name type="synonym">NADH5</name>
    <name type="synonym">ND5</name>
</gene>
<organism>
    <name type="scientific">Osphranter robustus</name>
    <name type="common">Wallaroo</name>
    <name type="synonym">Macropus robustus</name>
    <dbReference type="NCBI Taxonomy" id="9319"/>
    <lineage>
        <taxon>Eukaryota</taxon>
        <taxon>Metazoa</taxon>
        <taxon>Chordata</taxon>
        <taxon>Craniata</taxon>
        <taxon>Vertebrata</taxon>
        <taxon>Euteleostomi</taxon>
        <taxon>Mammalia</taxon>
        <taxon>Metatheria</taxon>
        <taxon>Diprotodontia</taxon>
        <taxon>Macropodidae</taxon>
        <taxon>Osphranter</taxon>
    </lineage>
</organism>
<comment type="function">
    <text evidence="1">Core subunit of the mitochondrial membrane respiratory chain NADH dehydrogenase (Complex I) which catalyzes electron transfer from NADH through the respiratory chain, using ubiquinone as an electron acceptor. Essential for the catalytic activity and assembly of complex I.</text>
</comment>
<comment type="catalytic activity">
    <reaction evidence="1">
        <text>a ubiquinone + NADH + 5 H(+)(in) = a ubiquinol + NAD(+) + 4 H(+)(out)</text>
        <dbReference type="Rhea" id="RHEA:29091"/>
        <dbReference type="Rhea" id="RHEA-COMP:9565"/>
        <dbReference type="Rhea" id="RHEA-COMP:9566"/>
        <dbReference type="ChEBI" id="CHEBI:15378"/>
        <dbReference type="ChEBI" id="CHEBI:16389"/>
        <dbReference type="ChEBI" id="CHEBI:17976"/>
        <dbReference type="ChEBI" id="CHEBI:57540"/>
        <dbReference type="ChEBI" id="CHEBI:57945"/>
        <dbReference type="EC" id="7.1.1.2"/>
    </reaction>
</comment>
<comment type="subunit">
    <text evidence="2">Core subunit of respiratory chain NADH dehydrogenase (Complex I) which is composed of 45 different subunits.</text>
</comment>
<comment type="subcellular location">
    <subcellularLocation>
        <location evidence="2">Mitochondrion inner membrane</location>
        <topology evidence="3">Multi-pass membrane protein</topology>
    </subcellularLocation>
</comment>
<comment type="similarity">
    <text evidence="4">Belongs to the complex I subunit 5 family.</text>
</comment>
<reference key="1">
    <citation type="journal article" date="1997" name="Proc. Natl. Acad. Sci. U.S.A.">
        <title>The complete mitochondrial genome of the wallaroo (Macropus robustus) and the phylogenetic relationship among Monotremata, Marsupialia, and Eutheria.</title>
        <authorList>
            <person name="Janke A."/>
            <person name="Xu X."/>
            <person name="Arnason U."/>
        </authorList>
    </citation>
    <scope>NUCLEOTIDE SEQUENCE [GENOMIC DNA]</scope>
</reference>
<dbReference type="EC" id="7.1.1.2" evidence="1"/>
<dbReference type="EMBL" id="Y10524">
    <property type="protein sequence ID" value="CAA71546.1"/>
    <property type="molecule type" value="Genomic_DNA"/>
</dbReference>
<dbReference type="PIR" id="T11438">
    <property type="entry name" value="T11438"/>
</dbReference>
<dbReference type="RefSeq" id="NP_007404.1">
    <property type="nucleotide sequence ID" value="NC_001794.1"/>
</dbReference>
<dbReference type="SMR" id="P92669"/>
<dbReference type="GeneID" id="808072"/>
<dbReference type="CTD" id="4540"/>
<dbReference type="GO" id="GO:0005743">
    <property type="term" value="C:mitochondrial inner membrane"/>
    <property type="evidence" value="ECO:0000250"/>
    <property type="project" value="UniProtKB"/>
</dbReference>
<dbReference type="GO" id="GO:0008137">
    <property type="term" value="F:NADH dehydrogenase (ubiquinone) activity"/>
    <property type="evidence" value="ECO:0000250"/>
    <property type="project" value="UniProtKB"/>
</dbReference>
<dbReference type="GO" id="GO:0015990">
    <property type="term" value="P:electron transport coupled proton transport"/>
    <property type="evidence" value="ECO:0007669"/>
    <property type="project" value="TreeGrafter"/>
</dbReference>
<dbReference type="GO" id="GO:0006120">
    <property type="term" value="P:mitochondrial electron transport, NADH to ubiquinone"/>
    <property type="evidence" value="ECO:0000250"/>
    <property type="project" value="UniProtKB"/>
</dbReference>
<dbReference type="GO" id="GO:0032981">
    <property type="term" value="P:mitochondrial respiratory chain complex I assembly"/>
    <property type="evidence" value="ECO:0000250"/>
    <property type="project" value="UniProtKB"/>
</dbReference>
<dbReference type="InterPro" id="IPR010934">
    <property type="entry name" value="NADH_DH_su5_C"/>
</dbReference>
<dbReference type="InterPro" id="IPR018393">
    <property type="entry name" value="NADHpl_OxRdtase_5_subgr"/>
</dbReference>
<dbReference type="InterPro" id="IPR001750">
    <property type="entry name" value="ND/Mrp_TM"/>
</dbReference>
<dbReference type="InterPro" id="IPR003945">
    <property type="entry name" value="NU5C-like"/>
</dbReference>
<dbReference type="InterPro" id="IPR001516">
    <property type="entry name" value="Proton_antipo_N"/>
</dbReference>
<dbReference type="NCBIfam" id="TIGR01974">
    <property type="entry name" value="NDH_I_L"/>
    <property type="match status" value="1"/>
</dbReference>
<dbReference type="PANTHER" id="PTHR42829">
    <property type="entry name" value="NADH-UBIQUINONE OXIDOREDUCTASE CHAIN 5"/>
    <property type="match status" value="1"/>
</dbReference>
<dbReference type="PANTHER" id="PTHR42829:SF2">
    <property type="entry name" value="NADH-UBIQUINONE OXIDOREDUCTASE CHAIN 5"/>
    <property type="match status" value="1"/>
</dbReference>
<dbReference type="Pfam" id="PF06455">
    <property type="entry name" value="NADH5_C"/>
    <property type="match status" value="1"/>
</dbReference>
<dbReference type="Pfam" id="PF00361">
    <property type="entry name" value="Proton_antipo_M"/>
    <property type="match status" value="1"/>
</dbReference>
<dbReference type="Pfam" id="PF00662">
    <property type="entry name" value="Proton_antipo_N"/>
    <property type="match status" value="1"/>
</dbReference>
<dbReference type="PRINTS" id="PR01434">
    <property type="entry name" value="NADHDHGNASE5"/>
</dbReference>
<protein>
    <recommendedName>
        <fullName>NADH-ubiquinone oxidoreductase chain 5</fullName>
        <ecNumber evidence="1">7.1.1.2</ecNumber>
    </recommendedName>
    <alternativeName>
        <fullName>NADH dehydrogenase subunit 5</fullName>
    </alternativeName>
</protein>
<accession>P92669</accession>
<proteinExistence type="inferred from homology"/>
<sequence length="602" mass="67541">MNFIFNSSMLLAITMLTFPLIYNLAFPDKTNNFPLYCKTTVKMAFFTSLPALLLFINTGQESTITNWQWFSIESLNMTMSFKLDYFSIIFIPIALYVTWSILEFSLWYMHSDPYIHRFFKYLITFLLTMIILVSANNLFQLFIGWEGVGIMSFMLIGWWFGRTDANTAALQAVLYNRIGDIGFMLAMAWLMINNSSWDLQHIFMTNMDTLALMGLVIAATGKSAQFGLHPWLPSAMEGPTPVSALLHSSTMVVAGIFLLIRFHPMIKDNPTILTTTLCLGAITTLFTAICAITQNDIKKIVAFSTSSQLGLMMVTIGLNQPYLAFLHICTHAFFKAMLFLCSGSIIHNLNDEQDIRKMGGLLNIMPITSSALITGSLALMGTPFLAGFYSKDSIIEAMNTSHTNTWALIITLIATALTAIYSLRIIYFALLNQPRFLPMSPINENHPNLTNPIIRLAMGSIFAGFILTMNIPPTSMVPLTMPPISKLSALIVTITGLLIAMELNSATNKSLMMSYIHTHNFSNMLGYFTYLFHRMYPLANLYLGQHIATMLIDLNWYEKTGPKGQANLHSTISSYISSTQKGLIKTYFLSFIISIPMIMLII</sequence>